<proteinExistence type="evidence at protein level"/>
<organism>
    <name type="scientific">Olea europaea</name>
    <name type="common">Common olive</name>
    <dbReference type="NCBI Taxonomy" id="4146"/>
    <lineage>
        <taxon>Eukaryota</taxon>
        <taxon>Viridiplantae</taxon>
        <taxon>Streptophyta</taxon>
        <taxon>Embryophyta</taxon>
        <taxon>Tracheophyta</taxon>
        <taxon>Spermatophyta</taxon>
        <taxon>Magnoliopsida</taxon>
        <taxon>eudicotyledons</taxon>
        <taxon>Gunneridae</taxon>
        <taxon>Pentapetalae</taxon>
        <taxon>asterids</taxon>
        <taxon>lamiids</taxon>
        <taxon>Lamiales</taxon>
        <taxon>Oleaceae</taxon>
        <taxon>Oleeae</taxon>
        <taxon>Olea</taxon>
    </lineage>
</organism>
<feature type="initiator methionine" description="Removed" evidence="1">
    <location>
        <position position="1"/>
    </location>
</feature>
<feature type="chain" id="PRO_0000425055" description="Profilin-7">
    <location>
        <begin position="2"/>
        <end position="131"/>
    </location>
</feature>
<feature type="short sequence motif" description="Involved in PIP2 interaction">
    <location>
        <begin position="81"/>
        <end position="97"/>
    </location>
</feature>
<feature type="modified residue" description="Phosphothreonine" evidence="1">
    <location>
        <position position="111"/>
    </location>
</feature>
<feature type="disulfide bond" evidence="3">
    <location>
        <begin position="13"/>
        <end position="115"/>
    </location>
</feature>
<sequence>MSWQAYVDEHLMCEIEGHHLASAAILGHDGTVWAQSADFPQFKPEEITGIMKDFDEPGHLAPTGMFVATAKYMVIQGEPGAVIRGKKGAGGITIKKTGQALVVGIYDEPMTPGQCNMVVERLGDYLMKQGL</sequence>
<dbReference type="EMBL" id="DQ663556">
    <property type="protein sequence ID" value="ABG81309.1"/>
    <property type="molecule type" value="mRNA"/>
</dbReference>
<dbReference type="SMR" id="A4KA52"/>
<dbReference type="Allergome" id="490">
    <property type="allergen name" value="Ole e 2"/>
</dbReference>
<dbReference type="GO" id="GO:0005938">
    <property type="term" value="C:cell cortex"/>
    <property type="evidence" value="ECO:0007669"/>
    <property type="project" value="TreeGrafter"/>
</dbReference>
<dbReference type="GO" id="GO:0005856">
    <property type="term" value="C:cytoskeleton"/>
    <property type="evidence" value="ECO:0007669"/>
    <property type="project" value="UniProtKB-SubCell"/>
</dbReference>
<dbReference type="GO" id="GO:0003785">
    <property type="term" value="F:actin monomer binding"/>
    <property type="evidence" value="ECO:0007669"/>
    <property type="project" value="TreeGrafter"/>
</dbReference>
<dbReference type="CDD" id="cd00148">
    <property type="entry name" value="PROF"/>
    <property type="match status" value="1"/>
</dbReference>
<dbReference type="FunFam" id="3.30.450.30:FF:000001">
    <property type="entry name" value="Profilin"/>
    <property type="match status" value="1"/>
</dbReference>
<dbReference type="Gene3D" id="3.30.450.30">
    <property type="entry name" value="Dynein light chain 2a, cytoplasmic"/>
    <property type="match status" value="1"/>
</dbReference>
<dbReference type="InterPro" id="IPR048278">
    <property type="entry name" value="PFN"/>
</dbReference>
<dbReference type="InterPro" id="IPR005455">
    <property type="entry name" value="PFN_euk"/>
</dbReference>
<dbReference type="InterPro" id="IPR036140">
    <property type="entry name" value="PFN_sf"/>
</dbReference>
<dbReference type="InterPro" id="IPR027310">
    <property type="entry name" value="Profilin_CS"/>
</dbReference>
<dbReference type="PANTHER" id="PTHR11604">
    <property type="entry name" value="PROFILIN"/>
    <property type="match status" value="1"/>
</dbReference>
<dbReference type="PANTHER" id="PTHR11604:SF31">
    <property type="entry name" value="PROFILIN"/>
    <property type="match status" value="1"/>
</dbReference>
<dbReference type="Pfam" id="PF00235">
    <property type="entry name" value="Profilin"/>
    <property type="match status" value="1"/>
</dbReference>
<dbReference type="PRINTS" id="PR00392">
    <property type="entry name" value="PROFILIN"/>
</dbReference>
<dbReference type="PRINTS" id="PR01640">
    <property type="entry name" value="PROFILINPLNT"/>
</dbReference>
<dbReference type="SMART" id="SM00392">
    <property type="entry name" value="PROF"/>
    <property type="match status" value="1"/>
</dbReference>
<dbReference type="SUPFAM" id="SSF55770">
    <property type="entry name" value="Profilin (actin-binding protein)"/>
    <property type="match status" value="1"/>
</dbReference>
<dbReference type="PROSITE" id="PS00414">
    <property type="entry name" value="PROFILIN"/>
    <property type="match status" value="1"/>
</dbReference>
<protein>
    <recommendedName>
        <fullName>Profilin-7</fullName>
    </recommendedName>
    <alternativeName>
        <fullName>Pollen allergen Ole e 2</fullName>
    </alternativeName>
    <allergenName>Ole e 2</allergenName>
</protein>
<keyword id="KW-0009">Actin-binding</keyword>
<keyword id="KW-0020">Allergen</keyword>
<keyword id="KW-0963">Cytoplasm</keyword>
<keyword id="KW-0206">Cytoskeleton</keyword>
<keyword id="KW-1015">Disulfide bond</keyword>
<keyword id="KW-0597">Phosphoprotein</keyword>
<evidence type="ECO:0000250" key="1"/>
<evidence type="ECO:0000305" key="2"/>
<evidence type="ECO:0000305" key="3">
    <source>
    </source>
</evidence>
<comment type="function">
    <text evidence="1">Binds to actin and affects the structure of the cytoskeleton. At high concentrations, profilin prevents the polymerization of actin, whereas it enhances it at low concentrations (By similarity).</text>
</comment>
<comment type="subunit">
    <text evidence="1">Occurs in many kinds of cells as a complex with monomeric actin in a 1:1 ratio.</text>
</comment>
<comment type="subcellular location">
    <subcellularLocation>
        <location evidence="1">Cytoplasm</location>
        <location evidence="1">Cytoskeleton</location>
    </subcellularLocation>
</comment>
<comment type="PTM">
    <text evidence="1">Phosphorylated by MAP kinases.</text>
</comment>
<comment type="polymorphism">
    <text>Several isoforms of the allergen exist due to polymorphism.</text>
</comment>
<comment type="allergen">
    <text>Causes an allergic reaction in human.</text>
</comment>
<comment type="miscellaneous">
    <text evidence="3">The variability of the residues taking part of IgE-binding epitopes might be responsible of the difference in cross-reactivity among olive pollen cultivars, and between distantly related pollen species, leading to a variable range of allergy reactions among atopic patients.</text>
</comment>
<comment type="similarity">
    <text evidence="2">Belongs to the profilin family.</text>
</comment>
<reference key="1">
    <citation type="journal article" date="2012" name="PLoS ONE">
        <title>Characterization of profilin polymorphism in pollen with a focus on multifunctionality.</title>
        <authorList>
            <person name="Jimenez-Lopez J.C."/>
            <person name="Morales S."/>
            <person name="Castro A.J."/>
            <person name="Volkmann D."/>
            <person name="Rodriguez-Garcia M.I."/>
            <person name="Alche Jde D."/>
        </authorList>
    </citation>
    <scope>NUCLEOTIDE SEQUENCE [MRNA]</scope>
    <scope>POLYMORPHISM</scope>
    <source>
        <strain>cv. Picual</strain>
    </source>
</reference>
<reference key="2">
    <citation type="journal article" date="2013" name="PLoS ONE">
        <title>Analysis of the effects of polymorphism on pollen profilin structural functionality and the generation of conformational, T- and B-cell epitopes.</title>
        <authorList>
            <person name="Jimenez-Lopez J.C."/>
            <person name="Rodriguez-Garcia M.I."/>
            <person name="Alche J.D."/>
        </authorList>
    </citation>
    <scope>3D-STRUCTURE MODELING</scope>
    <scope>DISULFIDE BOND</scope>
</reference>
<accession>A4KA52</accession>
<name>PROCL_OLEEU</name>